<protein>
    <recommendedName>
        <fullName evidence="1">Recombination protein RecR</fullName>
    </recommendedName>
</protein>
<reference key="1">
    <citation type="submission" date="2006-09" db="EMBL/GenBank/DDBJ databases">
        <authorList>
            <consortium name="The Klebsiella pneumonia Genome Sequencing Project"/>
            <person name="McClelland M."/>
            <person name="Sanderson E.K."/>
            <person name="Spieth J."/>
            <person name="Clifton W.S."/>
            <person name="Latreille P."/>
            <person name="Sabo A."/>
            <person name="Pepin K."/>
            <person name="Bhonagiri V."/>
            <person name="Porwollik S."/>
            <person name="Ali J."/>
            <person name="Wilson R.K."/>
        </authorList>
    </citation>
    <scope>NUCLEOTIDE SEQUENCE [LARGE SCALE GENOMIC DNA]</scope>
    <source>
        <strain>ATCC 700721 / MGH 78578</strain>
    </source>
</reference>
<evidence type="ECO:0000255" key="1">
    <source>
        <dbReference type="HAMAP-Rule" id="MF_00017"/>
    </source>
</evidence>
<organism>
    <name type="scientific">Klebsiella pneumoniae subsp. pneumoniae (strain ATCC 700721 / MGH 78578)</name>
    <dbReference type="NCBI Taxonomy" id="272620"/>
    <lineage>
        <taxon>Bacteria</taxon>
        <taxon>Pseudomonadati</taxon>
        <taxon>Pseudomonadota</taxon>
        <taxon>Gammaproteobacteria</taxon>
        <taxon>Enterobacterales</taxon>
        <taxon>Enterobacteriaceae</taxon>
        <taxon>Klebsiella/Raoultella group</taxon>
        <taxon>Klebsiella</taxon>
        <taxon>Klebsiella pneumoniae complex</taxon>
    </lineage>
</organism>
<name>RECR_KLEP7</name>
<accession>A6T5N5</accession>
<feature type="chain" id="PRO_1000001553" description="Recombination protein RecR">
    <location>
        <begin position="1"/>
        <end position="201"/>
    </location>
</feature>
<feature type="domain" description="Toprim" evidence="1">
    <location>
        <begin position="81"/>
        <end position="176"/>
    </location>
</feature>
<feature type="zinc finger region" description="C4-type" evidence="1">
    <location>
        <begin position="57"/>
        <end position="72"/>
    </location>
</feature>
<keyword id="KW-0227">DNA damage</keyword>
<keyword id="KW-0233">DNA recombination</keyword>
<keyword id="KW-0234">DNA repair</keyword>
<keyword id="KW-0479">Metal-binding</keyword>
<keyword id="KW-0862">Zinc</keyword>
<keyword id="KW-0863">Zinc-finger</keyword>
<gene>
    <name evidence="1" type="primary">recR</name>
    <name type="ordered locus">KPN78578_04450</name>
    <name type="ORF">KPN_00454</name>
</gene>
<dbReference type="EMBL" id="CP000647">
    <property type="protein sequence ID" value="ABR75906.1"/>
    <property type="molecule type" value="Genomic_DNA"/>
</dbReference>
<dbReference type="RefSeq" id="WP_002892177.1">
    <property type="nucleotide sequence ID" value="NC_009648.1"/>
</dbReference>
<dbReference type="SMR" id="A6T5N5"/>
<dbReference type="STRING" id="272620.KPN_00454"/>
<dbReference type="PaxDb" id="272620-KPN_00454"/>
<dbReference type="EnsemblBacteria" id="ABR75906">
    <property type="protein sequence ID" value="ABR75906"/>
    <property type="gene ID" value="KPN_00454"/>
</dbReference>
<dbReference type="GeneID" id="93252661"/>
<dbReference type="KEGG" id="kpn:KPN_00454"/>
<dbReference type="HOGENOM" id="CLU_060739_1_2_6"/>
<dbReference type="Proteomes" id="UP000000265">
    <property type="component" value="Chromosome"/>
</dbReference>
<dbReference type="GO" id="GO:0003677">
    <property type="term" value="F:DNA binding"/>
    <property type="evidence" value="ECO:0007669"/>
    <property type="project" value="UniProtKB-UniRule"/>
</dbReference>
<dbReference type="GO" id="GO:0008270">
    <property type="term" value="F:zinc ion binding"/>
    <property type="evidence" value="ECO:0007669"/>
    <property type="project" value="UniProtKB-KW"/>
</dbReference>
<dbReference type="GO" id="GO:0006310">
    <property type="term" value="P:DNA recombination"/>
    <property type="evidence" value="ECO:0007669"/>
    <property type="project" value="UniProtKB-UniRule"/>
</dbReference>
<dbReference type="GO" id="GO:0006281">
    <property type="term" value="P:DNA repair"/>
    <property type="evidence" value="ECO:0007669"/>
    <property type="project" value="UniProtKB-UniRule"/>
</dbReference>
<dbReference type="CDD" id="cd01025">
    <property type="entry name" value="TOPRIM_recR"/>
    <property type="match status" value="1"/>
</dbReference>
<dbReference type="FunFam" id="1.10.8.420:FF:000001">
    <property type="entry name" value="Recombination protein RecR"/>
    <property type="match status" value="1"/>
</dbReference>
<dbReference type="FunFam" id="3.40.1360.10:FF:000001">
    <property type="entry name" value="Recombination protein RecR"/>
    <property type="match status" value="1"/>
</dbReference>
<dbReference type="Gene3D" id="3.40.1360.10">
    <property type="match status" value="1"/>
</dbReference>
<dbReference type="Gene3D" id="6.10.250.240">
    <property type="match status" value="1"/>
</dbReference>
<dbReference type="Gene3D" id="1.10.8.420">
    <property type="entry name" value="RecR Domain 1"/>
    <property type="match status" value="1"/>
</dbReference>
<dbReference type="HAMAP" id="MF_00017">
    <property type="entry name" value="RecR"/>
    <property type="match status" value="1"/>
</dbReference>
<dbReference type="InterPro" id="IPR000093">
    <property type="entry name" value="DNA_Rcmb_RecR"/>
</dbReference>
<dbReference type="InterPro" id="IPR023627">
    <property type="entry name" value="Rcmb_RecR"/>
</dbReference>
<dbReference type="InterPro" id="IPR015967">
    <property type="entry name" value="Rcmb_RecR_Znf"/>
</dbReference>
<dbReference type="InterPro" id="IPR006171">
    <property type="entry name" value="TOPRIM_dom"/>
</dbReference>
<dbReference type="InterPro" id="IPR034137">
    <property type="entry name" value="TOPRIM_RecR"/>
</dbReference>
<dbReference type="NCBIfam" id="TIGR00615">
    <property type="entry name" value="recR"/>
    <property type="match status" value="1"/>
</dbReference>
<dbReference type="PANTHER" id="PTHR30446">
    <property type="entry name" value="RECOMBINATION PROTEIN RECR"/>
    <property type="match status" value="1"/>
</dbReference>
<dbReference type="PANTHER" id="PTHR30446:SF0">
    <property type="entry name" value="RECOMBINATION PROTEIN RECR"/>
    <property type="match status" value="1"/>
</dbReference>
<dbReference type="Pfam" id="PF21175">
    <property type="entry name" value="RecR_C"/>
    <property type="match status" value="1"/>
</dbReference>
<dbReference type="Pfam" id="PF21176">
    <property type="entry name" value="RecR_HhH"/>
    <property type="match status" value="1"/>
</dbReference>
<dbReference type="Pfam" id="PF02132">
    <property type="entry name" value="RecR_ZnF"/>
    <property type="match status" value="1"/>
</dbReference>
<dbReference type="Pfam" id="PF13662">
    <property type="entry name" value="Toprim_4"/>
    <property type="match status" value="1"/>
</dbReference>
<dbReference type="SMART" id="SM00493">
    <property type="entry name" value="TOPRIM"/>
    <property type="match status" value="1"/>
</dbReference>
<dbReference type="SUPFAM" id="SSF111304">
    <property type="entry name" value="Recombination protein RecR"/>
    <property type="match status" value="1"/>
</dbReference>
<dbReference type="PROSITE" id="PS01300">
    <property type="entry name" value="RECR"/>
    <property type="match status" value="1"/>
</dbReference>
<dbReference type="PROSITE" id="PS50880">
    <property type="entry name" value="TOPRIM"/>
    <property type="match status" value="1"/>
</dbReference>
<proteinExistence type="inferred from homology"/>
<comment type="function">
    <text evidence="1">May play a role in DNA repair. It seems to be involved in an RecBC-independent recombinational process of DNA repair. It may act with RecF and RecO.</text>
</comment>
<comment type="similarity">
    <text evidence="1">Belongs to the RecR family.</text>
</comment>
<sequence length="201" mass="21811">MQTSPLLTQLMEALRCLPGVGPKSAQRMAFTLLQRDRSGGMRLAQALTRAMSEIGHCADCRTFTEQEVCNICSNPRRQENGQICVVESPADIYAIEQTGQYSGRYFVLMGHLSPLDGIGPDDIGLDRLEQRLEAESITEVILATNPTVEGEATANYIAELCAQYGVDASRIAHGVPVGGELEMVDGTTLSHSLAGRHKITF</sequence>